<keyword id="KW-0963">Cytoplasm</keyword>
<keyword id="KW-0269">Exonuclease</keyword>
<keyword id="KW-0378">Hydrolase</keyword>
<keyword id="KW-0540">Nuclease</keyword>
<keyword id="KW-1185">Reference proteome</keyword>
<accession>A7ZIH5</accession>
<protein>
    <recommendedName>
        <fullName evidence="1">Exodeoxyribonuclease 7 small subunit</fullName>
        <ecNumber evidence="1">3.1.11.6</ecNumber>
    </recommendedName>
    <alternativeName>
        <fullName evidence="1">Exodeoxyribonuclease VII small subunit</fullName>
        <shortName evidence="1">Exonuclease VII small subunit</shortName>
    </alternativeName>
</protein>
<dbReference type="EC" id="3.1.11.6" evidence="1"/>
<dbReference type="EMBL" id="CP000800">
    <property type="protein sequence ID" value="ABV16922.1"/>
    <property type="molecule type" value="Genomic_DNA"/>
</dbReference>
<dbReference type="RefSeq" id="WP_001124935.1">
    <property type="nucleotide sequence ID" value="NC_009801.1"/>
</dbReference>
<dbReference type="SMR" id="A7ZIH5"/>
<dbReference type="GeneID" id="75202844"/>
<dbReference type="KEGG" id="ecw:EcE24377A_0453"/>
<dbReference type="HOGENOM" id="CLU_145918_3_3_6"/>
<dbReference type="Proteomes" id="UP000001122">
    <property type="component" value="Chromosome"/>
</dbReference>
<dbReference type="GO" id="GO:0005829">
    <property type="term" value="C:cytosol"/>
    <property type="evidence" value="ECO:0007669"/>
    <property type="project" value="TreeGrafter"/>
</dbReference>
<dbReference type="GO" id="GO:0009318">
    <property type="term" value="C:exodeoxyribonuclease VII complex"/>
    <property type="evidence" value="ECO:0007669"/>
    <property type="project" value="InterPro"/>
</dbReference>
<dbReference type="GO" id="GO:0008855">
    <property type="term" value="F:exodeoxyribonuclease VII activity"/>
    <property type="evidence" value="ECO:0007669"/>
    <property type="project" value="UniProtKB-UniRule"/>
</dbReference>
<dbReference type="GO" id="GO:0006308">
    <property type="term" value="P:DNA catabolic process"/>
    <property type="evidence" value="ECO:0007669"/>
    <property type="project" value="UniProtKB-UniRule"/>
</dbReference>
<dbReference type="FunFam" id="1.10.287.1040:FF:000001">
    <property type="entry name" value="Exodeoxyribonuclease 7 small subunit"/>
    <property type="match status" value="1"/>
</dbReference>
<dbReference type="Gene3D" id="1.10.287.1040">
    <property type="entry name" value="Exonuclease VII, small subunit"/>
    <property type="match status" value="1"/>
</dbReference>
<dbReference type="HAMAP" id="MF_00337">
    <property type="entry name" value="Exonuc_7_S"/>
    <property type="match status" value="1"/>
</dbReference>
<dbReference type="InterPro" id="IPR003761">
    <property type="entry name" value="Exonuc_VII_S"/>
</dbReference>
<dbReference type="InterPro" id="IPR037004">
    <property type="entry name" value="Exonuc_VII_ssu_sf"/>
</dbReference>
<dbReference type="NCBIfam" id="NF002137">
    <property type="entry name" value="PRK00977.1-1"/>
    <property type="match status" value="1"/>
</dbReference>
<dbReference type="NCBIfam" id="NF002140">
    <property type="entry name" value="PRK00977.1-4"/>
    <property type="match status" value="1"/>
</dbReference>
<dbReference type="NCBIfam" id="TIGR01280">
    <property type="entry name" value="xseB"/>
    <property type="match status" value="1"/>
</dbReference>
<dbReference type="PANTHER" id="PTHR34137">
    <property type="entry name" value="EXODEOXYRIBONUCLEASE 7 SMALL SUBUNIT"/>
    <property type="match status" value="1"/>
</dbReference>
<dbReference type="PANTHER" id="PTHR34137:SF1">
    <property type="entry name" value="EXODEOXYRIBONUCLEASE 7 SMALL SUBUNIT"/>
    <property type="match status" value="1"/>
</dbReference>
<dbReference type="Pfam" id="PF02609">
    <property type="entry name" value="Exonuc_VII_S"/>
    <property type="match status" value="1"/>
</dbReference>
<dbReference type="PIRSF" id="PIRSF006488">
    <property type="entry name" value="Exonuc_VII_S"/>
    <property type="match status" value="1"/>
</dbReference>
<dbReference type="SUPFAM" id="SSF116842">
    <property type="entry name" value="XseB-like"/>
    <property type="match status" value="1"/>
</dbReference>
<gene>
    <name evidence="1" type="primary">xseB</name>
    <name type="ordered locus">EcE24377A_0453</name>
</gene>
<feature type="chain" id="PRO_1000059716" description="Exodeoxyribonuclease 7 small subunit">
    <location>
        <begin position="1"/>
        <end position="80"/>
    </location>
</feature>
<proteinExistence type="inferred from homology"/>
<comment type="function">
    <text evidence="1">Bidirectionally degrades single-stranded DNA into large acid-insoluble oligonucleotides, which are then degraded further into small acid-soluble oligonucleotides.</text>
</comment>
<comment type="catalytic activity">
    <reaction evidence="1">
        <text>Exonucleolytic cleavage in either 5'- to 3'- or 3'- to 5'-direction to yield nucleoside 5'-phosphates.</text>
        <dbReference type="EC" id="3.1.11.6"/>
    </reaction>
</comment>
<comment type="subunit">
    <text evidence="1">Heterooligomer composed of large and small subunits.</text>
</comment>
<comment type="subcellular location">
    <subcellularLocation>
        <location evidence="1">Cytoplasm</location>
    </subcellularLocation>
</comment>
<comment type="similarity">
    <text evidence="1">Belongs to the XseB family.</text>
</comment>
<evidence type="ECO:0000255" key="1">
    <source>
        <dbReference type="HAMAP-Rule" id="MF_00337"/>
    </source>
</evidence>
<reference key="1">
    <citation type="journal article" date="2008" name="J. Bacteriol.">
        <title>The pangenome structure of Escherichia coli: comparative genomic analysis of E. coli commensal and pathogenic isolates.</title>
        <authorList>
            <person name="Rasko D.A."/>
            <person name="Rosovitz M.J."/>
            <person name="Myers G.S.A."/>
            <person name="Mongodin E.F."/>
            <person name="Fricke W.F."/>
            <person name="Gajer P."/>
            <person name="Crabtree J."/>
            <person name="Sebaihia M."/>
            <person name="Thomson N.R."/>
            <person name="Chaudhuri R."/>
            <person name="Henderson I.R."/>
            <person name="Sperandio V."/>
            <person name="Ravel J."/>
        </authorList>
    </citation>
    <scope>NUCLEOTIDE SEQUENCE [LARGE SCALE GENOMIC DNA]</scope>
    <source>
        <strain>E24377A / ETEC</strain>
    </source>
</reference>
<organism>
    <name type="scientific">Escherichia coli O139:H28 (strain E24377A / ETEC)</name>
    <dbReference type="NCBI Taxonomy" id="331111"/>
    <lineage>
        <taxon>Bacteria</taxon>
        <taxon>Pseudomonadati</taxon>
        <taxon>Pseudomonadota</taxon>
        <taxon>Gammaproteobacteria</taxon>
        <taxon>Enterobacterales</taxon>
        <taxon>Enterobacteriaceae</taxon>
        <taxon>Escherichia</taxon>
    </lineage>
</organism>
<name>EX7S_ECO24</name>
<sequence length="80" mass="8952">MPKKNEAPASFEKALSELEQIVTRLESGDLPLEEALNEFERGVQLARQGQAKLQQAEQRVQILLSDNEDASLTPFTPDNE</sequence>